<accession>Q0BI91</accession>
<reference key="1">
    <citation type="submission" date="2006-08" db="EMBL/GenBank/DDBJ databases">
        <title>Complete sequence of chromosome 1 of Burkholderia cepacia AMMD.</title>
        <authorList>
            <person name="Copeland A."/>
            <person name="Lucas S."/>
            <person name="Lapidus A."/>
            <person name="Barry K."/>
            <person name="Detter J.C."/>
            <person name="Glavina del Rio T."/>
            <person name="Hammon N."/>
            <person name="Israni S."/>
            <person name="Pitluck S."/>
            <person name="Bruce D."/>
            <person name="Chain P."/>
            <person name="Malfatti S."/>
            <person name="Shin M."/>
            <person name="Vergez L."/>
            <person name="Schmutz J."/>
            <person name="Larimer F."/>
            <person name="Land M."/>
            <person name="Hauser L."/>
            <person name="Kyrpides N."/>
            <person name="Kim E."/>
            <person name="Parke J."/>
            <person name="Coenye T."/>
            <person name="Konstantinidis K."/>
            <person name="Ramette A."/>
            <person name="Tiedje J."/>
            <person name="Richardson P."/>
        </authorList>
    </citation>
    <scope>NUCLEOTIDE SEQUENCE [LARGE SCALE GENOMIC DNA]</scope>
    <source>
        <strain>ATCC BAA-244 / DSM 16087 / CCUG 44356 / LMG 19182 / AMMD</strain>
    </source>
</reference>
<proteinExistence type="inferred from homology"/>
<comment type="function">
    <text evidence="1">This protein is one of the early assembly proteins of the 50S ribosomal subunit, although it is not seen to bind rRNA by itself. It is important during the early stages of 50S assembly.</text>
</comment>
<comment type="subunit">
    <text evidence="1">Part of the 50S ribosomal subunit.</text>
</comment>
<comment type="similarity">
    <text evidence="1">Belongs to the universal ribosomal protein uL13 family.</text>
</comment>
<protein>
    <recommendedName>
        <fullName evidence="1">Large ribosomal subunit protein uL13</fullName>
    </recommendedName>
    <alternativeName>
        <fullName evidence="2">50S ribosomal protein L13</fullName>
    </alternativeName>
</protein>
<organism>
    <name type="scientific">Burkholderia ambifaria (strain ATCC BAA-244 / DSM 16087 / CCUG 44356 / LMG 19182 / AMMD)</name>
    <name type="common">Burkholderia cepacia (strain AMMD)</name>
    <dbReference type="NCBI Taxonomy" id="339670"/>
    <lineage>
        <taxon>Bacteria</taxon>
        <taxon>Pseudomonadati</taxon>
        <taxon>Pseudomonadota</taxon>
        <taxon>Betaproteobacteria</taxon>
        <taxon>Burkholderiales</taxon>
        <taxon>Burkholderiaceae</taxon>
        <taxon>Burkholderia</taxon>
        <taxon>Burkholderia cepacia complex</taxon>
    </lineage>
</organism>
<keyword id="KW-0687">Ribonucleoprotein</keyword>
<keyword id="KW-0689">Ribosomal protein</keyword>
<feature type="chain" id="PRO_1000055354" description="Large ribosomal subunit protein uL13">
    <location>
        <begin position="1"/>
        <end position="142"/>
    </location>
</feature>
<sequence length="142" mass="15985">MKTFSAKAHEVTREWYVIDATDKVLGRVASEVARRLRGKHKPEFTPHVDTGDFIIIINASKLKVTGNKTLDKKYYRHSGYPGGIYETTFGKMQERFPGRALEKAVKGMLPKGPLGYAMIKKLKVYAEATHPHSAQQPKALEI</sequence>
<name>RL13_BURCM</name>
<evidence type="ECO:0000255" key="1">
    <source>
        <dbReference type="HAMAP-Rule" id="MF_01366"/>
    </source>
</evidence>
<evidence type="ECO:0000305" key="2"/>
<gene>
    <name evidence="1" type="primary">rplM</name>
    <name type="ordered locus">Bamb_0573</name>
</gene>
<dbReference type="EMBL" id="CP000440">
    <property type="protein sequence ID" value="ABI86132.1"/>
    <property type="molecule type" value="Genomic_DNA"/>
</dbReference>
<dbReference type="RefSeq" id="WP_009687896.1">
    <property type="nucleotide sequence ID" value="NZ_CP009798.1"/>
</dbReference>
<dbReference type="SMR" id="Q0BI91"/>
<dbReference type="GeneID" id="98106480"/>
<dbReference type="KEGG" id="bam:Bamb_0573"/>
<dbReference type="PATRIC" id="fig|339670.21.peg.1024"/>
<dbReference type="eggNOG" id="COG0102">
    <property type="taxonomic scope" value="Bacteria"/>
</dbReference>
<dbReference type="Proteomes" id="UP000000662">
    <property type="component" value="Chromosome 1"/>
</dbReference>
<dbReference type="GO" id="GO:0022625">
    <property type="term" value="C:cytosolic large ribosomal subunit"/>
    <property type="evidence" value="ECO:0007669"/>
    <property type="project" value="TreeGrafter"/>
</dbReference>
<dbReference type="GO" id="GO:0003729">
    <property type="term" value="F:mRNA binding"/>
    <property type="evidence" value="ECO:0007669"/>
    <property type="project" value="TreeGrafter"/>
</dbReference>
<dbReference type="GO" id="GO:0003735">
    <property type="term" value="F:structural constituent of ribosome"/>
    <property type="evidence" value="ECO:0007669"/>
    <property type="project" value="InterPro"/>
</dbReference>
<dbReference type="GO" id="GO:0017148">
    <property type="term" value="P:negative regulation of translation"/>
    <property type="evidence" value="ECO:0007669"/>
    <property type="project" value="TreeGrafter"/>
</dbReference>
<dbReference type="GO" id="GO:0006412">
    <property type="term" value="P:translation"/>
    <property type="evidence" value="ECO:0007669"/>
    <property type="project" value="UniProtKB-UniRule"/>
</dbReference>
<dbReference type="CDD" id="cd00392">
    <property type="entry name" value="Ribosomal_L13"/>
    <property type="match status" value="1"/>
</dbReference>
<dbReference type="FunFam" id="3.90.1180.10:FF:000001">
    <property type="entry name" value="50S ribosomal protein L13"/>
    <property type="match status" value="1"/>
</dbReference>
<dbReference type="Gene3D" id="3.90.1180.10">
    <property type="entry name" value="Ribosomal protein L13"/>
    <property type="match status" value="1"/>
</dbReference>
<dbReference type="HAMAP" id="MF_01366">
    <property type="entry name" value="Ribosomal_uL13"/>
    <property type="match status" value="1"/>
</dbReference>
<dbReference type="InterPro" id="IPR005822">
    <property type="entry name" value="Ribosomal_uL13"/>
</dbReference>
<dbReference type="InterPro" id="IPR005823">
    <property type="entry name" value="Ribosomal_uL13_bac-type"/>
</dbReference>
<dbReference type="InterPro" id="IPR036899">
    <property type="entry name" value="Ribosomal_uL13_sf"/>
</dbReference>
<dbReference type="NCBIfam" id="TIGR01066">
    <property type="entry name" value="rplM_bact"/>
    <property type="match status" value="1"/>
</dbReference>
<dbReference type="PANTHER" id="PTHR11545:SF2">
    <property type="entry name" value="LARGE RIBOSOMAL SUBUNIT PROTEIN UL13M"/>
    <property type="match status" value="1"/>
</dbReference>
<dbReference type="PANTHER" id="PTHR11545">
    <property type="entry name" value="RIBOSOMAL PROTEIN L13"/>
    <property type="match status" value="1"/>
</dbReference>
<dbReference type="Pfam" id="PF00572">
    <property type="entry name" value="Ribosomal_L13"/>
    <property type="match status" value="1"/>
</dbReference>
<dbReference type="PIRSF" id="PIRSF002181">
    <property type="entry name" value="Ribosomal_L13"/>
    <property type="match status" value="1"/>
</dbReference>
<dbReference type="SUPFAM" id="SSF52161">
    <property type="entry name" value="Ribosomal protein L13"/>
    <property type="match status" value="1"/>
</dbReference>